<name>RPOB_CAMJR</name>
<accession>Q5HVY9</accession>
<comment type="function">
    <text evidence="1">DNA-dependent RNA polymerase catalyzes the transcription of DNA into RNA using the four ribonucleoside triphosphates as substrates.</text>
</comment>
<comment type="catalytic activity">
    <reaction evidence="1">
        <text>RNA(n) + a ribonucleoside 5'-triphosphate = RNA(n+1) + diphosphate</text>
        <dbReference type="Rhea" id="RHEA:21248"/>
        <dbReference type="Rhea" id="RHEA-COMP:14527"/>
        <dbReference type="Rhea" id="RHEA-COMP:17342"/>
        <dbReference type="ChEBI" id="CHEBI:33019"/>
        <dbReference type="ChEBI" id="CHEBI:61557"/>
        <dbReference type="ChEBI" id="CHEBI:140395"/>
        <dbReference type="EC" id="2.7.7.6"/>
    </reaction>
</comment>
<comment type="subunit">
    <text evidence="1">The RNAP catalytic core consists of 2 alpha, 1 beta, 1 beta' and 1 omega subunit. When a sigma factor is associated with the core the holoenzyme is formed, which can initiate transcription.</text>
</comment>
<comment type="similarity">
    <text evidence="1">Belongs to the RNA polymerase beta chain family.</text>
</comment>
<feature type="chain" id="PRO_0000224041" description="DNA-directed RNA polymerase subunit beta">
    <location>
        <begin position="1"/>
        <end position="1378"/>
    </location>
</feature>
<sequence length="1378" mass="155934">MCDMLDNKLGNRLRVDFSNISKQIEIPNLLQLQKKSFDYFLNLDNGESGIEKVFKSIFPIHDPQNRLSLEYVSSEIGKPKYTIRECMERGLTYSVNLKMKIRLTLHEKDEKTGEKVGVKDIKEQEIYIREIPLMTDRVSFIINGVERVVVNQLHRSPGVIFKEEESSTVANKLVYTAQIIPDRGSWLYFEYDAKDVLYVRINKRRKVPVTMLFRALGYKKQDIIKLFYPIQTIHVKKDKFLTEFNPNDFMDRIEYDIKDEKGKIVHQAGKRLTKKKAEQLIKDGLKWIEYPVEILLNRYLANPIIDKESGEVLFDSLTLLDESKLAKIKEQKSFDIANDLANGVDAAIINSFAQDGETLKLLKQSENIDDENDLAAIRIYKVMRPGEPVVKDAAKAFVNDLFFNPERYDLTKVGRMKMNHKLGLEVPEYVTVLTNEDIIKTAKYLIKVKNGKGHIDDRDHLGNRRIRSIGELLANELHLGLAKMQKAIRDKFTSLNADLDKVMPYDLINPKMITTTIIEFFTGGQLSQFMDQTNPLSEVTHKRRLSALGEGGLVKERAGFEVRDVHATHYGRICPVETPEGQNIGLINTLSTYAKVNELGFVEAPYRKVVNGKVTNEVVYLTATQEEGLFIAPASTKVDAKGNIVEEFVEARQDGETILARREEVQLIDLCSGMVVGVAASLIPFLEHDDANRALMGSNMQRQAVPLLTASAPIVGTGMEQIIARDAWEAVKAKRGGVVEKVDNKSIFILGEDDKGPFIDHYTMEKNLRTNQNTNYIQHPIVKKGDIVKAGQIIADGPSMDQGELAIGKNALIAFMPWNGYNYEDAIVVSERIIREDTFTSVHIYEKEIEARELKDGIEEITKDIPNVKEEDVAHLDESGIAKIGTHIKPGMILVGKVSPKGEVKPTPEERLLRAIFGEKAGHVVNKSLYATASLEGVVVDVKIFTKKGYEKDDRAIKSYDKEKMALEKEHHDRLLMMDREEMLRVCALLSKASLNSDQKIGDKNYKKGQTADISELEKINRFTLTTLIKAYSKEIQKEYDDLKNHFQNEKKKLKAEHDEKLEILEKDDILPSGVIKLVKVYIATKRKLKVGDKMAGRHGNKGIVSTIVPEVDMPYLPNGKSVDIALNPLGVPSRMNIGQILESHLGLVGLRLGDQIQEIFDRKQKDFLKELRAKMLEICSIPRLANEKEFIKSLSDEELLNYARDWSKGVKFSTPVFEGVNIEEFSKLFKMAKIDMDGKTELYDGRTGEKIAERVHVGCMYMLKLHHLVDEKVHARSTGPYSLVTQQPVGGKALFGGQRFGEMEVWALEAYGAAHTLREMLTIKSDDVEGRFSAYKALTKGENVPATGIPETFFVLTNELKSLALDVEIFDKDEDNE</sequence>
<gene>
    <name evidence="1" type="primary">rpoB</name>
    <name type="ordered locus">CJE0528</name>
</gene>
<proteinExistence type="inferred from homology"/>
<reference key="1">
    <citation type="journal article" date="2005" name="PLoS Biol.">
        <title>Major structural differences and novel potential virulence mechanisms from the genomes of multiple Campylobacter species.</title>
        <authorList>
            <person name="Fouts D.E."/>
            <person name="Mongodin E.F."/>
            <person name="Mandrell R.E."/>
            <person name="Miller W.G."/>
            <person name="Rasko D.A."/>
            <person name="Ravel J."/>
            <person name="Brinkac L.M."/>
            <person name="DeBoy R.T."/>
            <person name="Parker C.T."/>
            <person name="Daugherty S.C."/>
            <person name="Dodson R.J."/>
            <person name="Durkin A.S."/>
            <person name="Madupu R."/>
            <person name="Sullivan S.A."/>
            <person name="Shetty J.U."/>
            <person name="Ayodeji M.A."/>
            <person name="Shvartsbeyn A."/>
            <person name="Schatz M.C."/>
            <person name="Badger J.H."/>
            <person name="Fraser C.M."/>
            <person name="Nelson K.E."/>
        </authorList>
    </citation>
    <scope>NUCLEOTIDE SEQUENCE [LARGE SCALE GENOMIC DNA]</scope>
    <source>
        <strain>RM1221</strain>
    </source>
</reference>
<organism>
    <name type="scientific">Campylobacter jejuni (strain RM1221)</name>
    <dbReference type="NCBI Taxonomy" id="195099"/>
    <lineage>
        <taxon>Bacteria</taxon>
        <taxon>Pseudomonadati</taxon>
        <taxon>Campylobacterota</taxon>
        <taxon>Epsilonproteobacteria</taxon>
        <taxon>Campylobacterales</taxon>
        <taxon>Campylobacteraceae</taxon>
        <taxon>Campylobacter</taxon>
    </lineage>
</organism>
<protein>
    <recommendedName>
        <fullName evidence="1">DNA-directed RNA polymerase subunit beta</fullName>
        <shortName evidence="1">RNAP subunit beta</shortName>
        <ecNumber evidence="1">2.7.7.6</ecNumber>
    </recommendedName>
    <alternativeName>
        <fullName evidence="1">RNA polymerase subunit beta</fullName>
    </alternativeName>
    <alternativeName>
        <fullName evidence="1">Transcriptase subunit beta</fullName>
    </alternativeName>
</protein>
<evidence type="ECO:0000255" key="1">
    <source>
        <dbReference type="HAMAP-Rule" id="MF_01321"/>
    </source>
</evidence>
<keyword id="KW-0240">DNA-directed RNA polymerase</keyword>
<keyword id="KW-0548">Nucleotidyltransferase</keyword>
<keyword id="KW-0804">Transcription</keyword>
<keyword id="KW-0808">Transferase</keyword>
<dbReference type="EC" id="2.7.7.6" evidence="1"/>
<dbReference type="EMBL" id="CP000025">
    <property type="protein sequence ID" value="AAW35115.1"/>
    <property type="molecule type" value="Genomic_DNA"/>
</dbReference>
<dbReference type="RefSeq" id="WP_002859036.1">
    <property type="nucleotide sequence ID" value="NC_003912.7"/>
</dbReference>
<dbReference type="SMR" id="Q5HVY9"/>
<dbReference type="KEGG" id="cjr:CJE0528"/>
<dbReference type="HOGENOM" id="CLU_000524_4_3_7"/>
<dbReference type="GO" id="GO:0000428">
    <property type="term" value="C:DNA-directed RNA polymerase complex"/>
    <property type="evidence" value="ECO:0007669"/>
    <property type="project" value="UniProtKB-KW"/>
</dbReference>
<dbReference type="GO" id="GO:0003677">
    <property type="term" value="F:DNA binding"/>
    <property type="evidence" value="ECO:0007669"/>
    <property type="project" value="UniProtKB-UniRule"/>
</dbReference>
<dbReference type="GO" id="GO:0003899">
    <property type="term" value="F:DNA-directed RNA polymerase activity"/>
    <property type="evidence" value="ECO:0007669"/>
    <property type="project" value="UniProtKB-UniRule"/>
</dbReference>
<dbReference type="GO" id="GO:0032549">
    <property type="term" value="F:ribonucleoside binding"/>
    <property type="evidence" value="ECO:0007669"/>
    <property type="project" value="InterPro"/>
</dbReference>
<dbReference type="GO" id="GO:0006351">
    <property type="term" value="P:DNA-templated transcription"/>
    <property type="evidence" value="ECO:0007669"/>
    <property type="project" value="UniProtKB-UniRule"/>
</dbReference>
<dbReference type="CDD" id="cd00653">
    <property type="entry name" value="RNA_pol_B_RPB2"/>
    <property type="match status" value="1"/>
</dbReference>
<dbReference type="Gene3D" id="2.40.50.100">
    <property type="match status" value="1"/>
</dbReference>
<dbReference type="Gene3D" id="2.40.50.150">
    <property type="match status" value="1"/>
</dbReference>
<dbReference type="Gene3D" id="3.90.1100.10">
    <property type="match status" value="2"/>
</dbReference>
<dbReference type="Gene3D" id="2.30.150.10">
    <property type="entry name" value="DNA-directed RNA polymerase, beta subunit, external 1 domain"/>
    <property type="match status" value="1"/>
</dbReference>
<dbReference type="Gene3D" id="2.40.270.10">
    <property type="entry name" value="DNA-directed RNA polymerase, subunit 2, domain 6"/>
    <property type="match status" value="1"/>
</dbReference>
<dbReference type="Gene3D" id="3.90.1800.10">
    <property type="entry name" value="RNA polymerase alpha subunit dimerisation domain"/>
    <property type="match status" value="1"/>
</dbReference>
<dbReference type="Gene3D" id="3.90.1110.10">
    <property type="entry name" value="RNA polymerase Rpb2, domain 2"/>
    <property type="match status" value="1"/>
</dbReference>
<dbReference type="HAMAP" id="MF_01321">
    <property type="entry name" value="RNApol_bact_RpoB"/>
    <property type="match status" value="1"/>
</dbReference>
<dbReference type="InterPro" id="IPR042107">
    <property type="entry name" value="DNA-dir_RNA_pol_bsu_ext_1_sf"/>
</dbReference>
<dbReference type="InterPro" id="IPR019462">
    <property type="entry name" value="DNA-dir_RNA_pol_bsu_external_1"/>
</dbReference>
<dbReference type="InterPro" id="IPR015712">
    <property type="entry name" value="DNA-dir_RNA_pol_su2"/>
</dbReference>
<dbReference type="InterPro" id="IPR007120">
    <property type="entry name" value="DNA-dir_RNAP_su2_dom"/>
</dbReference>
<dbReference type="InterPro" id="IPR037033">
    <property type="entry name" value="DNA-dir_RNAP_su2_hyb_sf"/>
</dbReference>
<dbReference type="InterPro" id="IPR010243">
    <property type="entry name" value="RNA_pol_bsu_bac"/>
</dbReference>
<dbReference type="InterPro" id="IPR007121">
    <property type="entry name" value="RNA_pol_bsu_CS"/>
</dbReference>
<dbReference type="InterPro" id="IPR007644">
    <property type="entry name" value="RNA_pol_bsu_protrusion"/>
</dbReference>
<dbReference type="InterPro" id="IPR007642">
    <property type="entry name" value="RNA_pol_Rpb2_2"/>
</dbReference>
<dbReference type="InterPro" id="IPR037034">
    <property type="entry name" value="RNA_pol_Rpb2_2_sf"/>
</dbReference>
<dbReference type="InterPro" id="IPR007645">
    <property type="entry name" value="RNA_pol_Rpb2_3"/>
</dbReference>
<dbReference type="InterPro" id="IPR007641">
    <property type="entry name" value="RNA_pol_Rpb2_7"/>
</dbReference>
<dbReference type="InterPro" id="IPR014724">
    <property type="entry name" value="RNA_pol_RPB2_OB-fold"/>
</dbReference>
<dbReference type="NCBIfam" id="NF001616">
    <property type="entry name" value="PRK00405.1"/>
    <property type="match status" value="1"/>
</dbReference>
<dbReference type="NCBIfam" id="TIGR02013">
    <property type="entry name" value="rpoB"/>
    <property type="match status" value="1"/>
</dbReference>
<dbReference type="PANTHER" id="PTHR20856">
    <property type="entry name" value="DNA-DIRECTED RNA POLYMERASE I SUBUNIT 2"/>
    <property type="match status" value="1"/>
</dbReference>
<dbReference type="Pfam" id="PF04563">
    <property type="entry name" value="RNA_pol_Rpb2_1"/>
    <property type="match status" value="1"/>
</dbReference>
<dbReference type="Pfam" id="PF04561">
    <property type="entry name" value="RNA_pol_Rpb2_2"/>
    <property type="match status" value="2"/>
</dbReference>
<dbReference type="Pfam" id="PF04565">
    <property type="entry name" value="RNA_pol_Rpb2_3"/>
    <property type="match status" value="1"/>
</dbReference>
<dbReference type="Pfam" id="PF10385">
    <property type="entry name" value="RNA_pol_Rpb2_45"/>
    <property type="match status" value="1"/>
</dbReference>
<dbReference type="Pfam" id="PF00562">
    <property type="entry name" value="RNA_pol_Rpb2_6"/>
    <property type="match status" value="1"/>
</dbReference>
<dbReference type="Pfam" id="PF04560">
    <property type="entry name" value="RNA_pol_Rpb2_7"/>
    <property type="match status" value="1"/>
</dbReference>
<dbReference type="SUPFAM" id="SSF64484">
    <property type="entry name" value="beta and beta-prime subunits of DNA dependent RNA-polymerase"/>
    <property type="match status" value="1"/>
</dbReference>
<dbReference type="PROSITE" id="PS01166">
    <property type="entry name" value="RNA_POL_BETA"/>
    <property type="match status" value="1"/>
</dbReference>